<dbReference type="EMBL" id="J05249">
    <property type="protein sequence ID" value="AAA36560.1"/>
    <property type="molecule type" value="mRNA"/>
</dbReference>
<dbReference type="EMBL" id="CR450348">
    <property type="protein sequence ID" value="CAG29344.1"/>
    <property type="molecule type" value="mRNA"/>
</dbReference>
<dbReference type="EMBL" id="DQ001128">
    <property type="protein sequence ID" value="AAX84514.1"/>
    <property type="molecule type" value="Genomic_DNA"/>
</dbReference>
<dbReference type="EMBL" id="AL109927">
    <property type="status" value="NOT_ANNOTATED_CDS"/>
    <property type="molecule type" value="Genomic_DNA"/>
</dbReference>
<dbReference type="EMBL" id="BC001630">
    <property type="protein sequence ID" value="AAH01630.1"/>
    <property type="molecule type" value="mRNA"/>
</dbReference>
<dbReference type="EMBL" id="BC012157">
    <property type="protein sequence ID" value="AAH12157.1"/>
    <property type="molecule type" value="mRNA"/>
</dbReference>
<dbReference type="EMBL" id="BC021257">
    <property type="protein sequence ID" value="AAH21257.1"/>
    <property type="molecule type" value="mRNA"/>
</dbReference>
<dbReference type="CCDS" id="CCDS314.1">
    <molecule id="P15927-1"/>
</dbReference>
<dbReference type="CCDS" id="CCDS72740.1">
    <molecule id="P15927-2"/>
</dbReference>
<dbReference type="PIR" id="A43711">
    <property type="entry name" value="A43711"/>
</dbReference>
<dbReference type="RefSeq" id="NP_001273005.1">
    <property type="nucleotide sequence ID" value="NM_001286076.1"/>
</dbReference>
<dbReference type="RefSeq" id="NP_001284487.1">
    <molecule id="P15927-2"/>
    <property type="nucleotide sequence ID" value="NM_001297558.1"/>
</dbReference>
<dbReference type="RefSeq" id="NP_002937.1">
    <molecule id="P15927-1"/>
    <property type="nucleotide sequence ID" value="NM_002946.5"/>
</dbReference>
<dbReference type="PDB" id="1DPU">
    <property type="method" value="NMR"/>
    <property type="chains" value="A=172-270"/>
</dbReference>
<dbReference type="PDB" id="1L1O">
    <property type="method" value="X-ray"/>
    <property type="resolution" value="2.80 A"/>
    <property type="chains" value="B/E=44-171"/>
</dbReference>
<dbReference type="PDB" id="1QUQ">
    <property type="method" value="X-ray"/>
    <property type="resolution" value="2.50 A"/>
    <property type="chains" value="A/C=43-171"/>
</dbReference>
<dbReference type="PDB" id="1Z1D">
    <property type="method" value="NMR"/>
    <property type="chains" value="A=172-270"/>
</dbReference>
<dbReference type="PDB" id="2PI2">
    <property type="method" value="X-ray"/>
    <property type="resolution" value="2.00 A"/>
    <property type="chains" value="A/B/C/D=1-270"/>
</dbReference>
<dbReference type="PDB" id="2PQA">
    <property type="method" value="X-ray"/>
    <property type="resolution" value="2.50 A"/>
    <property type="chains" value="A/C=42-172"/>
</dbReference>
<dbReference type="PDB" id="2Z6K">
    <property type="method" value="X-ray"/>
    <property type="resolution" value="3.00 A"/>
    <property type="chains" value="A/B=1-270"/>
</dbReference>
<dbReference type="PDB" id="3KDF">
    <property type="method" value="X-ray"/>
    <property type="resolution" value="1.98 A"/>
    <property type="chains" value="B/D=41-172"/>
</dbReference>
<dbReference type="PDB" id="4MQV">
    <property type="method" value="X-ray"/>
    <property type="resolution" value="1.95 A"/>
    <property type="chains" value="A/C=202-270"/>
</dbReference>
<dbReference type="PDB" id="4OU0">
    <property type="method" value="X-ray"/>
    <property type="resolution" value="1.40 A"/>
    <property type="chains" value="A=202-270"/>
</dbReference>
<dbReference type="PDB" id="8RK2">
    <property type="method" value="EM"/>
    <property type="resolution" value="3.20 A"/>
    <property type="chains" value="B=1-270"/>
</dbReference>
<dbReference type="PDB" id="9MJ5">
    <property type="method" value="EM"/>
    <property type="resolution" value="3.50 A"/>
    <property type="chains" value="B=35-270"/>
</dbReference>
<dbReference type="PDBsum" id="1DPU"/>
<dbReference type="PDBsum" id="1L1O"/>
<dbReference type="PDBsum" id="1QUQ"/>
<dbReference type="PDBsum" id="1Z1D"/>
<dbReference type="PDBsum" id="2PI2"/>
<dbReference type="PDBsum" id="2PQA"/>
<dbReference type="PDBsum" id="2Z6K"/>
<dbReference type="PDBsum" id="3KDF"/>
<dbReference type="PDBsum" id="4MQV"/>
<dbReference type="PDBsum" id="4OU0"/>
<dbReference type="PDBsum" id="8RK2"/>
<dbReference type="PDBsum" id="9MJ5"/>
<dbReference type="BMRB" id="P15927"/>
<dbReference type="EMDB" id="EMD-19255"/>
<dbReference type="EMDB" id="EMD-48312"/>
<dbReference type="SASBDB" id="P15927"/>
<dbReference type="SMR" id="P15927"/>
<dbReference type="BioGRID" id="112038">
    <property type="interactions" value="2917"/>
</dbReference>
<dbReference type="ComplexPortal" id="CPX-1878">
    <property type="entry name" value="Replication protein A complex, RPA2 variant"/>
</dbReference>
<dbReference type="CORUM" id="P15927"/>
<dbReference type="DIP" id="DIP-24187N"/>
<dbReference type="FunCoup" id="P15927">
    <property type="interactions" value="3060"/>
</dbReference>
<dbReference type="IntAct" id="P15927">
    <property type="interactions" value="121"/>
</dbReference>
<dbReference type="MINT" id="P15927"/>
<dbReference type="STRING" id="9606.ENSP00000363017"/>
<dbReference type="GlyGen" id="P15927">
    <property type="glycosylation" value="1 site, 1 O-linked glycan (1 site)"/>
</dbReference>
<dbReference type="iPTMnet" id="P15927"/>
<dbReference type="MetOSite" id="P15927"/>
<dbReference type="PhosphoSitePlus" id="P15927"/>
<dbReference type="SwissPalm" id="P15927"/>
<dbReference type="BioMuta" id="RPA2"/>
<dbReference type="DMDM" id="132474"/>
<dbReference type="jPOST" id="P15927"/>
<dbReference type="MassIVE" id="P15927"/>
<dbReference type="PaxDb" id="9606-ENSP00000363017"/>
<dbReference type="PeptideAtlas" id="P15927"/>
<dbReference type="ProteomicsDB" id="53246">
    <molecule id="P15927-1"/>
</dbReference>
<dbReference type="ProteomicsDB" id="53247">
    <molecule id="P15927-2"/>
</dbReference>
<dbReference type="ProteomicsDB" id="53248">
    <molecule id="P15927-3"/>
</dbReference>
<dbReference type="Pumba" id="P15927"/>
<dbReference type="Antibodypedia" id="4296">
    <property type="antibodies" value="946 antibodies from 44 providers"/>
</dbReference>
<dbReference type="DNASU" id="6118"/>
<dbReference type="Ensembl" id="ENST00000313433.11">
    <molecule id="P15927-3"/>
    <property type="protein sequence ID" value="ENSP00000363015.3"/>
    <property type="gene ID" value="ENSG00000117748.10"/>
</dbReference>
<dbReference type="Ensembl" id="ENST00000373909.7">
    <molecule id="P15927-2"/>
    <property type="protein sequence ID" value="ENSP00000363017.3"/>
    <property type="gene ID" value="ENSG00000117748.10"/>
</dbReference>
<dbReference type="Ensembl" id="ENST00000373912.8">
    <molecule id="P15927-1"/>
    <property type="protein sequence ID" value="ENSP00000363021.3"/>
    <property type="gene ID" value="ENSG00000117748.10"/>
</dbReference>
<dbReference type="GeneID" id="6118"/>
<dbReference type="KEGG" id="hsa:6118"/>
<dbReference type="MANE-Select" id="ENST00000373912.8">
    <property type="protein sequence ID" value="ENSP00000363021.3"/>
    <property type="RefSeq nucleotide sequence ID" value="NM_002946.5"/>
    <property type="RefSeq protein sequence ID" value="NP_002937.1"/>
</dbReference>
<dbReference type="UCSC" id="uc001bpe.3">
    <molecule id="P15927-1"/>
    <property type="organism name" value="human"/>
</dbReference>
<dbReference type="AGR" id="HGNC:10290"/>
<dbReference type="CTD" id="6118"/>
<dbReference type="DisGeNET" id="6118"/>
<dbReference type="GeneCards" id="RPA2"/>
<dbReference type="HGNC" id="HGNC:10290">
    <property type="gene designation" value="RPA2"/>
</dbReference>
<dbReference type="HPA" id="ENSG00000117748">
    <property type="expression patterns" value="Low tissue specificity"/>
</dbReference>
<dbReference type="MIM" id="179836">
    <property type="type" value="gene"/>
</dbReference>
<dbReference type="neXtProt" id="NX_P15927"/>
<dbReference type="OpenTargets" id="ENSG00000117748"/>
<dbReference type="PharmGKB" id="PA34652"/>
<dbReference type="VEuPathDB" id="HostDB:ENSG00000117748"/>
<dbReference type="eggNOG" id="KOG3108">
    <property type="taxonomic scope" value="Eukaryota"/>
</dbReference>
<dbReference type="GeneTree" id="ENSGT00390000010045"/>
<dbReference type="HOGENOM" id="CLU_051033_1_0_1"/>
<dbReference type="InParanoid" id="P15927"/>
<dbReference type="OMA" id="SFGNKRY"/>
<dbReference type="OrthoDB" id="25571at2759"/>
<dbReference type="PAN-GO" id="P15927">
    <property type="GO annotations" value="6 GO annotations based on evolutionary models"/>
</dbReference>
<dbReference type="PhylomeDB" id="P15927"/>
<dbReference type="TreeFam" id="TF105242"/>
<dbReference type="PathwayCommons" id="P15927"/>
<dbReference type="Reactome" id="R-HSA-110312">
    <property type="pathway name" value="Translesion synthesis by REV1"/>
</dbReference>
<dbReference type="Reactome" id="R-HSA-110314">
    <property type="pathway name" value="Recognition of DNA damage by PCNA-containing replication complex"/>
</dbReference>
<dbReference type="Reactome" id="R-HSA-110320">
    <property type="pathway name" value="Translesion Synthesis by POLH"/>
</dbReference>
<dbReference type="Reactome" id="R-HSA-174437">
    <property type="pathway name" value="Removal of the Flap Intermediate from the C-strand"/>
</dbReference>
<dbReference type="Reactome" id="R-HSA-176187">
    <property type="pathway name" value="Activation of ATR in response to replication stress"/>
</dbReference>
<dbReference type="Reactome" id="R-HSA-3371453">
    <property type="pathway name" value="Regulation of HSF1-mediated heat shock response"/>
</dbReference>
<dbReference type="Reactome" id="R-HSA-3371511">
    <property type="pathway name" value="HSF1 activation"/>
</dbReference>
<dbReference type="Reactome" id="R-HSA-5358565">
    <property type="pathway name" value="Mismatch repair (MMR) directed by MSH2:MSH6 (MutSalpha)"/>
</dbReference>
<dbReference type="Reactome" id="R-HSA-5358606">
    <property type="pathway name" value="Mismatch repair (MMR) directed by MSH2:MSH3 (MutSbeta)"/>
</dbReference>
<dbReference type="Reactome" id="R-HSA-5651801">
    <property type="pathway name" value="PCNA-Dependent Long Patch Base Excision Repair"/>
</dbReference>
<dbReference type="Reactome" id="R-HSA-5655862">
    <property type="pathway name" value="Translesion synthesis by POLK"/>
</dbReference>
<dbReference type="Reactome" id="R-HSA-5656121">
    <property type="pathway name" value="Translesion synthesis by POLI"/>
</dbReference>
<dbReference type="Reactome" id="R-HSA-5656169">
    <property type="pathway name" value="Termination of translesion DNA synthesis"/>
</dbReference>
<dbReference type="Reactome" id="R-HSA-5685938">
    <property type="pathway name" value="HDR through Single Strand Annealing (SSA)"/>
</dbReference>
<dbReference type="Reactome" id="R-HSA-5685942">
    <property type="pathway name" value="HDR through Homologous Recombination (HRR)"/>
</dbReference>
<dbReference type="Reactome" id="R-HSA-5693607">
    <property type="pathway name" value="Processing of DNA double-strand break ends"/>
</dbReference>
<dbReference type="Reactome" id="R-HSA-5693616">
    <property type="pathway name" value="Presynaptic phase of homologous DNA pairing and strand exchange"/>
</dbReference>
<dbReference type="Reactome" id="R-HSA-5696395">
    <property type="pathway name" value="Formation of Incision Complex in GG-NER"/>
</dbReference>
<dbReference type="Reactome" id="R-HSA-5696397">
    <property type="pathway name" value="Gap-filling DNA repair synthesis and ligation in GG-NER"/>
</dbReference>
<dbReference type="Reactome" id="R-HSA-5696400">
    <property type="pathway name" value="Dual Incision in GG-NER"/>
</dbReference>
<dbReference type="Reactome" id="R-HSA-6782135">
    <property type="pathway name" value="Dual incision in TC-NER"/>
</dbReference>
<dbReference type="Reactome" id="R-HSA-6782210">
    <property type="pathway name" value="Gap-filling DNA repair synthesis and ligation in TC-NER"/>
</dbReference>
<dbReference type="Reactome" id="R-HSA-6783310">
    <property type="pathway name" value="Fanconi Anemia Pathway"/>
</dbReference>
<dbReference type="Reactome" id="R-HSA-6804756">
    <property type="pathway name" value="Regulation of TP53 Activity through Phosphorylation"/>
</dbReference>
<dbReference type="Reactome" id="R-HSA-68962">
    <property type="pathway name" value="Activation of the pre-replicative complex"/>
</dbReference>
<dbReference type="Reactome" id="R-HSA-69166">
    <property type="pathway name" value="Removal of the Flap Intermediate"/>
</dbReference>
<dbReference type="Reactome" id="R-HSA-69473">
    <property type="pathway name" value="G2/M DNA damage checkpoint"/>
</dbReference>
<dbReference type="Reactome" id="R-HSA-912446">
    <property type="pathway name" value="Meiotic recombination"/>
</dbReference>
<dbReference type="Reactome" id="R-HSA-9709570">
    <property type="pathway name" value="Impaired BRCA2 binding to RAD51"/>
</dbReference>
<dbReference type="SignaLink" id="P15927"/>
<dbReference type="SIGNOR" id="P15927"/>
<dbReference type="BioGRID-ORCS" id="6118">
    <property type="hits" value="817 hits in 1171 CRISPR screens"/>
</dbReference>
<dbReference type="CD-CODE" id="B5B9A610">
    <property type="entry name" value="PML body"/>
</dbReference>
<dbReference type="ChiTaRS" id="RPA2">
    <property type="organism name" value="human"/>
</dbReference>
<dbReference type="EvolutionaryTrace" id="P15927"/>
<dbReference type="GeneWiki" id="RPA2"/>
<dbReference type="GenomeRNAi" id="6118"/>
<dbReference type="Pharos" id="P15927">
    <property type="development level" value="Tbio"/>
</dbReference>
<dbReference type="PRO" id="PR:P15927"/>
<dbReference type="Proteomes" id="UP000005640">
    <property type="component" value="Chromosome 1"/>
</dbReference>
<dbReference type="RNAct" id="P15927">
    <property type="molecule type" value="protein"/>
</dbReference>
<dbReference type="Bgee" id="ENSG00000117748">
    <property type="expression patterns" value="Expressed in ventricular zone and 204 other cell types or tissues"/>
</dbReference>
<dbReference type="ExpressionAtlas" id="P15927">
    <property type="expression patterns" value="baseline and differential"/>
</dbReference>
<dbReference type="GO" id="GO:0000785">
    <property type="term" value="C:chromatin"/>
    <property type="evidence" value="ECO:0000314"/>
    <property type="project" value="CACAO"/>
</dbReference>
<dbReference type="GO" id="GO:0000781">
    <property type="term" value="C:chromosome, telomeric region"/>
    <property type="evidence" value="ECO:0007005"/>
    <property type="project" value="BHF-UCL"/>
</dbReference>
<dbReference type="GO" id="GO:0005662">
    <property type="term" value="C:DNA replication factor A complex"/>
    <property type="evidence" value="ECO:0000314"/>
    <property type="project" value="UniProtKB"/>
</dbReference>
<dbReference type="GO" id="GO:0016604">
    <property type="term" value="C:nuclear body"/>
    <property type="evidence" value="ECO:0000314"/>
    <property type="project" value="HPA"/>
</dbReference>
<dbReference type="GO" id="GO:0005654">
    <property type="term" value="C:nucleoplasm"/>
    <property type="evidence" value="ECO:0000314"/>
    <property type="project" value="HPA"/>
</dbReference>
<dbReference type="GO" id="GO:0005634">
    <property type="term" value="C:nucleus"/>
    <property type="evidence" value="ECO:0000314"/>
    <property type="project" value="UniProtKB"/>
</dbReference>
<dbReference type="GO" id="GO:0016605">
    <property type="term" value="C:PML body"/>
    <property type="evidence" value="ECO:0000314"/>
    <property type="project" value="UniProtKB"/>
</dbReference>
<dbReference type="GO" id="GO:0003684">
    <property type="term" value="F:damaged DNA binding"/>
    <property type="evidence" value="ECO:0000314"/>
    <property type="project" value="UniProtKB"/>
</dbReference>
<dbReference type="GO" id="GO:0019899">
    <property type="term" value="F:enzyme binding"/>
    <property type="evidence" value="ECO:0000353"/>
    <property type="project" value="UniProtKB"/>
</dbReference>
<dbReference type="GO" id="GO:0098505">
    <property type="term" value="F:G-rich strand telomeric DNA binding"/>
    <property type="evidence" value="ECO:0000314"/>
    <property type="project" value="BHF-UCL"/>
</dbReference>
<dbReference type="GO" id="GO:0019903">
    <property type="term" value="F:protein phosphatase binding"/>
    <property type="evidence" value="ECO:0000353"/>
    <property type="project" value="UniProtKB"/>
</dbReference>
<dbReference type="GO" id="GO:0003697">
    <property type="term" value="F:single-stranded DNA binding"/>
    <property type="evidence" value="ECO:0000314"/>
    <property type="project" value="UniProtKB"/>
</dbReference>
<dbReference type="GO" id="GO:0042162">
    <property type="term" value="F:telomeric DNA binding"/>
    <property type="evidence" value="ECO:0000318"/>
    <property type="project" value="GO_Central"/>
</dbReference>
<dbReference type="GO" id="GO:0031625">
    <property type="term" value="F:ubiquitin protein ligase binding"/>
    <property type="evidence" value="ECO:0000353"/>
    <property type="project" value="UniProtKB"/>
</dbReference>
<dbReference type="GO" id="GO:0006284">
    <property type="term" value="P:base-excision repair"/>
    <property type="evidence" value="ECO:0000314"/>
    <property type="project" value="UniProtKB"/>
</dbReference>
<dbReference type="GO" id="GO:0006260">
    <property type="term" value="P:DNA replication"/>
    <property type="evidence" value="ECO:0000314"/>
    <property type="project" value="UniProtKB"/>
</dbReference>
<dbReference type="GO" id="GO:0000724">
    <property type="term" value="P:double-strand break repair via homologous recombination"/>
    <property type="evidence" value="ECO:0000315"/>
    <property type="project" value="UniProtKB"/>
</dbReference>
<dbReference type="GO" id="GO:0006298">
    <property type="term" value="P:mismatch repair"/>
    <property type="evidence" value="ECO:0000315"/>
    <property type="project" value="UniProtKB"/>
</dbReference>
<dbReference type="GO" id="GO:0031571">
    <property type="term" value="P:mitotic G1 DNA damage checkpoint signaling"/>
    <property type="evidence" value="ECO:0000315"/>
    <property type="project" value="UniProtKB"/>
</dbReference>
<dbReference type="GO" id="GO:0006289">
    <property type="term" value="P:nucleotide-excision repair"/>
    <property type="evidence" value="ECO:0000315"/>
    <property type="project" value="UniProtKB"/>
</dbReference>
<dbReference type="GO" id="GO:0034502">
    <property type="term" value="P:protein localization to chromosome"/>
    <property type="evidence" value="ECO:0000314"/>
    <property type="project" value="UniProtKB"/>
</dbReference>
<dbReference type="GO" id="GO:2000001">
    <property type="term" value="P:regulation of DNA damage checkpoint"/>
    <property type="evidence" value="ECO:0000315"/>
    <property type="project" value="UniProtKB"/>
</dbReference>
<dbReference type="GO" id="GO:0010569">
    <property type="term" value="P:regulation of double-strand break repair via homologous recombination"/>
    <property type="evidence" value="ECO:0000315"/>
    <property type="project" value="UniProtKB"/>
</dbReference>
<dbReference type="GO" id="GO:0000723">
    <property type="term" value="P:telomere maintenance"/>
    <property type="evidence" value="ECO:0000315"/>
    <property type="project" value="UniProtKB"/>
</dbReference>
<dbReference type="CDD" id="cd04478">
    <property type="entry name" value="RPA2_DBD_D"/>
    <property type="match status" value="1"/>
</dbReference>
<dbReference type="DisProt" id="DP01361"/>
<dbReference type="FunFam" id="1.10.10.10:FF:000168">
    <property type="entry name" value="Replication protein A 32 kDa subunit"/>
    <property type="match status" value="1"/>
</dbReference>
<dbReference type="FunFam" id="2.40.50.140:FF:000149">
    <property type="entry name" value="Replication protein A 32 kDa subunit"/>
    <property type="match status" value="1"/>
</dbReference>
<dbReference type="Gene3D" id="2.40.50.140">
    <property type="entry name" value="Nucleic acid-binding proteins"/>
    <property type="match status" value="1"/>
</dbReference>
<dbReference type="Gene3D" id="1.10.10.10">
    <property type="entry name" value="Winged helix-like DNA-binding domain superfamily/Winged helix DNA-binding domain"/>
    <property type="match status" value="1"/>
</dbReference>
<dbReference type="IDEAL" id="IID00026"/>
<dbReference type="InterPro" id="IPR012340">
    <property type="entry name" value="NA-bd_OB-fold"/>
</dbReference>
<dbReference type="InterPro" id="IPR040260">
    <property type="entry name" value="RFA2-like"/>
</dbReference>
<dbReference type="InterPro" id="IPR014646">
    <property type="entry name" value="Rfa2/RPA32"/>
</dbReference>
<dbReference type="InterPro" id="IPR014892">
    <property type="entry name" value="RPA_C"/>
</dbReference>
<dbReference type="InterPro" id="IPR036388">
    <property type="entry name" value="WH-like_DNA-bd_sf"/>
</dbReference>
<dbReference type="InterPro" id="IPR036390">
    <property type="entry name" value="WH_DNA-bd_sf"/>
</dbReference>
<dbReference type="PANTHER" id="PTHR13989:SF54">
    <property type="entry name" value="REPLICATION PROTEIN A 32 KDA SUBUNIT"/>
    <property type="match status" value="1"/>
</dbReference>
<dbReference type="PANTHER" id="PTHR13989">
    <property type="entry name" value="REPLICATION PROTEIN A-RELATED"/>
    <property type="match status" value="1"/>
</dbReference>
<dbReference type="Pfam" id="PF08784">
    <property type="entry name" value="RPA_C"/>
    <property type="match status" value="1"/>
</dbReference>
<dbReference type="PIRSF" id="PIRSF036949">
    <property type="entry name" value="RPA32"/>
    <property type="match status" value="1"/>
</dbReference>
<dbReference type="SUPFAM" id="SSF50249">
    <property type="entry name" value="Nucleic acid-binding proteins"/>
    <property type="match status" value="1"/>
</dbReference>
<dbReference type="SUPFAM" id="SSF46785">
    <property type="entry name" value="Winged helix' DNA-binding domain"/>
    <property type="match status" value="1"/>
</dbReference>
<keyword id="KW-0002">3D-structure</keyword>
<keyword id="KW-0007">Acetylation</keyword>
<keyword id="KW-0025">Alternative splicing</keyword>
<keyword id="KW-0903">Direct protein sequencing</keyword>
<keyword id="KW-0227">DNA damage</keyword>
<keyword id="KW-0233">DNA recombination</keyword>
<keyword id="KW-0234">DNA repair</keyword>
<keyword id="KW-0235">DNA replication</keyword>
<keyword id="KW-0238">DNA-binding</keyword>
<keyword id="KW-1017">Isopeptide bond</keyword>
<keyword id="KW-0539">Nucleus</keyword>
<keyword id="KW-0597">Phosphoprotein</keyword>
<keyword id="KW-1267">Proteomics identification</keyword>
<keyword id="KW-1185">Reference proteome</keyword>
<keyword id="KW-0832">Ubl conjugation</keyword>
<protein>
    <recommendedName>
        <fullName>Replication protein A 32 kDa subunit</fullName>
        <shortName>RP-A p32</shortName>
    </recommendedName>
    <alternativeName>
        <fullName>Replication factor A protein 2</fullName>
        <shortName>RF-A protein 2</shortName>
    </alternativeName>
    <alternativeName>
        <fullName>Replication protein A 34 kDa subunit</fullName>
        <shortName>RP-A p34</shortName>
    </alternativeName>
</protein>
<sequence length="270" mass="29247">MWNSGFESYGSSSYGGAGGYTQSPGGFGSPAPSQAEKKSRARAQHIVPCTISQLLSATLVDEVFRIGNVEISQVTIVGIIRHAEKAPTNIVYKIDDMTAAPMDVRQWVDTDDTSSENTVVPPETYVKVAGHLRSFQNKKSLVAFKIMPLEDMNEFTTHILEVINAHMVLSKANSQPSAGRAPISNPGMSEAGNFGGNSFMPANGLTVAQNQVLNLIKACPRPEGLNFQDLKNQLKHMSVSSIKQAVDFLSNEGHIYSTVDDDHFKSTDAE</sequence>
<reference key="1">
    <citation type="journal article" date="1990" name="J. Biol. Chem.">
        <title>The primary structure of the 32-kDa subunit of human replication protein A.</title>
        <authorList>
            <person name="Erdile L.F."/>
            <person name="Wold M.S."/>
            <person name="Kelly T.J."/>
        </authorList>
    </citation>
    <scope>NUCLEOTIDE SEQUENCE [MRNA] (ISOFORM 1)</scope>
    <scope>PARTIAL PROTEIN SEQUENCE</scope>
    <scope>FUNCTION IN DNA REPLICATION</scope>
    <scope>IDENTIFICATION IN RPA COMPLEX</scope>
</reference>
<reference key="2">
    <citation type="submission" date="2004-05" db="EMBL/GenBank/DDBJ databases">
        <title>Cloning of human full open reading frames in Gateway(TM) system entry vector (pDONR201).</title>
        <authorList>
            <person name="Ebert L."/>
            <person name="Schick M."/>
            <person name="Neubert P."/>
            <person name="Schatten R."/>
            <person name="Henze S."/>
            <person name="Korn B."/>
        </authorList>
    </citation>
    <scope>NUCLEOTIDE SEQUENCE [LARGE SCALE MRNA] (ISOFORM 1)</scope>
</reference>
<reference key="3">
    <citation type="submission" date="2005-04" db="EMBL/GenBank/DDBJ databases">
        <authorList>
            <consortium name="NIEHS SNPs program"/>
        </authorList>
    </citation>
    <scope>NUCLEOTIDE SEQUENCE [GENOMIC DNA]</scope>
    <scope>VARIANTS SER-14; ARG-15 AND SER-203</scope>
</reference>
<reference key="4">
    <citation type="journal article" date="2006" name="Nature">
        <title>The DNA sequence and biological annotation of human chromosome 1.</title>
        <authorList>
            <person name="Gregory S.G."/>
            <person name="Barlow K.F."/>
            <person name="McLay K.E."/>
            <person name="Kaul R."/>
            <person name="Swarbreck D."/>
            <person name="Dunham A."/>
            <person name="Scott C.E."/>
            <person name="Howe K.L."/>
            <person name="Woodfine K."/>
            <person name="Spencer C.C.A."/>
            <person name="Jones M.C."/>
            <person name="Gillson C."/>
            <person name="Searle S."/>
            <person name="Zhou Y."/>
            <person name="Kokocinski F."/>
            <person name="McDonald L."/>
            <person name="Evans R."/>
            <person name="Phillips K."/>
            <person name="Atkinson A."/>
            <person name="Cooper R."/>
            <person name="Jones C."/>
            <person name="Hall R.E."/>
            <person name="Andrews T.D."/>
            <person name="Lloyd C."/>
            <person name="Ainscough R."/>
            <person name="Almeida J.P."/>
            <person name="Ambrose K.D."/>
            <person name="Anderson F."/>
            <person name="Andrew R.W."/>
            <person name="Ashwell R.I.S."/>
            <person name="Aubin K."/>
            <person name="Babbage A.K."/>
            <person name="Bagguley C.L."/>
            <person name="Bailey J."/>
            <person name="Beasley H."/>
            <person name="Bethel G."/>
            <person name="Bird C.P."/>
            <person name="Bray-Allen S."/>
            <person name="Brown J.Y."/>
            <person name="Brown A.J."/>
            <person name="Buckley D."/>
            <person name="Burton J."/>
            <person name="Bye J."/>
            <person name="Carder C."/>
            <person name="Chapman J.C."/>
            <person name="Clark S.Y."/>
            <person name="Clarke G."/>
            <person name="Clee C."/>
            <person name="Cobley V."/>
            <person name="Collier R.E."/>
            <person name="Corby N."/>
            <person name="Coville G.J."/>
            <person name="Davies J."/>
            <person name="Deadman R."/>
            <person name="Dunn M."/>
            <person name="Earthrowl M."/>
            <person name="Ellington A.G."/>
            <person name="Errington H."/>
            <person name="Frankish A."/>
            <person name="Frankland J."/>
            <person name="French L."/>
            <person name="Garner P."/>
            <person name="Garnett J."/>
            <person name="Gay L."/>
            <person name="Ghori M.R.J."/>
            <person name="Gibson R."/>
            <person name="Gilby L.M."/>
            <person name="Gillett W."/>
            <person name="Glithero R.J."/>
            <person name="Grafham D.V."/>
            <person name="Griffiths C."/>
            <person name="Griffiths-Jones S."/>
            <person name="Grocock R."/>
            <person name="Hammond S."/>
            <person name="Harrison E.S.I."/>
            <person name="Hart E."/>
            <person name="Haugen E."/>
            <person name="Heath P.D."/>
            <person name="Holmes S."/>
            <person name="Holt K."/>
            <person name="Howden P.J."/>
            <person name="Hunt A.R."/>
            <person name="Hunt S.E."/>
            <person name="Hunter G."/>
            <person name="Isherwood J."/>
            <person name="James R."/>
            <person name="Johnson C."/>
            <person name="Johnson D."/>
            <person name="Joy A."/>
            <person name="Kay M."/>
            <person name="Kershaw J.K."/>
            <person name="Kibukawa M."/>
            <person name="Kimberley A.M."/>
            <person name="King A."/>
            <person name="Knights A.J."/>
            <person name="Lad H."/>
            <person name="Laird G."/>
            <person name="Lawlor S."/>
            <person name="Leongamornlert D.A."/>
            <person name="Lloyd D.M."/>
            <person name="Loveland J."/>
            <person name="Lovell J."/>
            <person name="Lush M.J."/>
            <person name="Lyne R."/>
            <person name="Martin S."/>
            <person name="Mashreghi-Mohammadi M."/>
            <person name="Matthews L."/>
            <person name="Matthews N.S.W."/>
            <person name="McLaren S."/>
            <person name="Milne S."/>
            <person name="Mistry S."/>
            <person name="Moore M.J.F."/>
            <person name="Nickerson T."/>
            <person name="O'Dell C.N."/>
            <person name="Oliver K."/>
            <person name="Palmeiri A."/>
            <person name="Palmer S.A."/>
            <person name="Parker A."/>
            <person name="Patel D."/>
            <person name="Pearce A.V."/>
            <person name="Peck A.I."/>
            <person name="Pelan S."/>
            <person name="Phelps K."/>
            <person name="Phillimore B.J."/>
            <person name="Plumb R."/>
            <person name="Rajan J."/>
            <person name="Raymond C."/>
            <person name="Rouse G."/>
            <person name="Saenphimmachak C."/>
            <person name="Sehra H.K."/>
            <person name="Sheridan E."/>
            <person name="Shownkeen R."/>
            <person name="Sims S."/>
            <person name="Skuce C.D."/>
            <person name="Smith M."/>
            <person name="Steward C."/>
            <person name="Subramanian S."/>
            <person name="Sycamore N."/>
            <person name="Tracey A."/>
            <person name="Tromans A."/>
            <person name="Van Helmond Z."/>
            <person name="Wall M."/>
            <person name="Wallis J.M."/>
            <person name="White S."/>
            <person name="Whitehead S.L."/>
            <person name="Wilkinson J.E."/>
            <person name="Willey D.L."/>
            <person name="Williams H."/>
            <person name="Wilming L."/>
            <person name="Wray P.W."/>
            <person name="Wu Z."/>
            <person name="Coulson A."/>
            <person name="Vaudin M."/>
            <person name="Sulston J.E."/>
            <person name="Durbin R.M."/>
            <person name="Hubbard T."/>
            <person name="Wooster R."/>
            <person name="Dunham I."/>
            <person name="Carter N.P."/>
            <person name="McVean G."/>
            <person name="Ross M.T."/>
            <person name="Harrow J."/>
            <person name="Olson M.V."/>
            <person name="Beck S."/>
            <person name="Rogers J."/>
            <person name="Bentley D.R."/>
        </authorList>
    </citation>
    <scope>NUCLEOTIDE SEQUENCE [LARGE SCALE GENOMIC DNA]</scope>
</reference>
<reference key="5">
    <citation type="journal article" date="2004" name="Genome Res.">
        <title>The status, quality, and expansion of the NIH full-length cDNA project: the Mammalian Gene Collection (MGC).</title>
        <authorList>
            <consortium name="The MGC Project Team"/>
        </authorList>
    </citation>
    <scope>NUCLEOTIDE SEQUENCE [LARGE SCALE MRNA] (ISOFORM 1)</scope>
    <source>
        <tissue>Kidney</tissue>
        <tissue>Lung</tissue>
        <tissue>Muscle</tissue>
    </source>
</reference>
<reference key="6">
    <citation type="journal article" date="1990" name="Genes Dev.">
        <title>Cell-cycle-regulated phosphorylation of DNA replication factor A from human and yeast cells.</title>
        <authorList>
            <person name="Din S."/>
            <person name="Brill S.J."/>
            <person name="Fairman M.P."/>
            <person name="Stillman B."/>
        </authorList>
    </citation>
    <scope>CELL CYCLE-DEPENDENT PHOSPHORYLATION</scope>
</reference>
<reference key="7">
    <citation type="journal article" date="1992" name="EMBO J.">
        <title>cdc2 family kinases phosphorylate a human cell DNA replication factor, RPA, and activate DNA replication.</title>
        <authorList>
            <person name="Dutta A."/>
            <person name="Stillman B."/>
        </authorList>
    </citation>
    <scope>DNA DAMAGE-INDUCED PHOSPHORYLATION</scope>
    <scope>PHOSPHORYLATION AT SER-23 AND SER-29</scope>
</reference>
<reference key="8">
    <citation type="journal article" date="1993" name="Mol. Cell. Biol.">
        <title>The ionizing radiation-induced replication protein A phosphorylation response differs between ataxia telangiectasia and normal human cells.</title>
        <authorList>
            <person name="Liu V.F."/>
            <person name="Weaver D.T."/>
        </authorList>
    </citation>
    <scope>PHOSPHORYLATION AT SER-23 AND SER-29</scope>
</reference>
<reference key="9">
    <citation type="journal article" date="1995" name="Cell">
        <title>Mammalian DNA nucleotide excision repair reconstituted with purified protein components.</title>
        <authorList>
            <person name="Aboussekhra A."/>
            <person name="Biggerstaff M."/>
            <person name="Shivji M.K."/>
            <person name="Vilpo J.A."/>
            <person name="Moncollin V."/>
            <person name="Podust V.N."/>
            <person name="Protic M."/>
            <person name="Huebscher U."/>
            <person name="Egly J.M."/>
            <person name="Wood R.D."/>
        </authorList>
    </citation>
    <scope>FUNCTION IN NUCLEOTIDE EXCISION REPAIR</scope>
</reference>
<reference key="10">
    <citation type="journal article" date="1995" name="Nature">
        <title>RPA involvement in the damage-recognition and incision steps of nucleotide excision repair.</title>
        <authorList>
            <person name="He Z."/>
            <person name="Henricksen L.A."/>
            <person name="Wold M.S."/>
            <person name="Ingles C.J."/>
        </authorList>
    </citation>
    <scope>FUNCTION IN NUCLEOTIDE EXCISION REPAIR</scope>
    <scope>INTERACTION WITH XPA</scope>
</reference>
<reference key="11">
    <citation type="journal article" date="1996" name="J. Biol. Chem.">
        <title>Physical interaction between human RAD52 and RPA is required for homologous recombination in mammalian cells.</title>
        <authorList>
            <person name="Park M.S."/>
            <person name="Ludwig D.L."/>
            <person name="Stigger E."/>
            <person name="Lee S.H."/>
        </authorList>
    </citation>
    <scope>FUNCTION IN HOMOLOGOUS RECOMBINATION</scope>
    <scope>INTERACTION WITH RAD52</scope>
</reference>
<reference key="12">
    <citation type="journal article" date="1997" name="J. Biol. Chem.">
        <title>Mapping of amino acid residues in the p34 subunit of human single-stranded DNA-binding protein phosphorylated by DNA-dependent protein kinase and Cdc2 kinase in vitro.</title>
        <authorList>
            <person name="Niu H."/>
            <person name="Erdjument-Bromage H."/>
            <person name="Pan Z.-Q."/>
            <person name="Lee S.-H."/>
            <person name="Tempst P."/>
            <person name="Hurwitz J."/>
        </authorList>
    </citation>
    <scope>ACETYLATION AT MET-1</scope>
    <scope>PHOSPHORYLATION AT THR-21; SER-29 AND SER-33</scope>
    <scope>IDENTIFICATION BY MASS SPECTROMETRY</scope>
    <scope>MUTAGENESIS OF SER-29</scope>
</reference>
<reference key="13">
    <citation type="journal article" date="1997" name="J. Biol. Chem.">
        <title>Sites of UV-induced phosphorylation of the p34 subunit of replication protein A from HeLa cells.</title>
        <authorList>
            <person name="Zernik-Kobak M."/>
            <person name="Vasunia K."/>
            <person name="Connelly M."/>
            <person name="Anderson C.W."/>
            <person name="Dixon K."/>
        </authorList>
    </citation>
    <scope>PHOSPHORYLATION AT THR-21; SER-23; SER-29 AND SER-33</scope>
</reference>
<reference key="14">
    <citation type="journal article" date="1998" name="J. Biol. Chem.">
        <title>The evolutionarily conserved zinc finger motif in the largest subunit of human replication protein A is required for DNA replication and mismatch repair but not for nucleotide excision repair.</title>
        <authorList>
            <person name="Lin Y.L."/>
            <person name="Shivji M.K."/>
            <person name="Chen C."/>
            <person name="Kolodner R."/>
            <person name="Wood R.D."/>
            <person name="Dutta A."/>
        </authorList>
    </citation>
    <scope>FUNCTION IN DNA REPLICATION</scope>
    <scope>FUNCTION IN DNA MISMATCH REPAIR</scope>
    <scope>FUNCTION IN NUCLEOTIDE EXCISION REPAIR</scope>
</reference>
<reference key="15">
    <citation type="journal article" date="1998" name="J. Biol. Chem.">
        <title>Replication protein A stimulates long patch DNA base excision repair.</title>
        <authorList>
            <person name="DeMott M.S."/>
            <person name="Zigman S."/>
            <person name="Bambara R.A."/>
        </authorList>
    </citation>
    <scope>FUNCTION IN BASE EXCISION REPAIR</scope>
</reference>
<reference key="16">
    <citation type="journal article" date="2000" name="Nucleic Acids Res.">
        <title>RBT1, a novel transcriptional co-activator, binds the second subunit of replication protein A.</title>
        <authorList>
            <person name="Cho J.M."/>
            <person name="Song D.J."/>
            <person name="Bergeron J."/>
            <person name="Benlimame N."/>
            <person name="Wold M.S."/>
            <person name="Alaoui-Jamali M.A."/>
        </authorList>
    </citation>
    <scope>INTERACTION WITH SERTAD3</scope>
    <scope>SUBCELLULAR LOCATION</scope>
</reference>
<reference key="17">
    <citation type="journal article" date="2003" name="Curr. Biol.">
        <title>ATR kinase activity regulates the intranuclear translocation of ATR and RPA following ionizing radiation.</title>
        <authorList>
            <person name="Barr S.M."/>
            <person name="Leung C.G."/>
            <person name="Chang E.E."/>
            <person name="Cimprich K.A."/>
        </authorList>
    </citation>
    <scope>PHOSPHORYLATION BY ATR</scope>
    <scope>SUBCELLULAR LOCATION</scope>
</reference>
<reference key="18">
    <citation type="journal article" date="2004" name="J. Biol. Chem.">
        <title>Coordinated regulation of replication protein A activities by its subunits p14 and p32.</title>
        <authorList>
            <person name="Weisshart K."/>
            <person name="Pestryakov P."/>
            <person name="Smith R.W.P."/>
            <person name="Hartmann H."/>
            <person name="Kremmer E."/>
            <person name="Lavrik O."/>
            <person name="Nasheuer H.-P."/>
        </authorList>
    </citation>
    <scope>FUNCTION IN DNA REPLICATION</scope>
</reference>
<reference key="19">
    <citation type="journal article" date="2007" name="Blood">
        <title>FANCJ (BACH1) helicase forms DNA damage inducible foci with replication protein A and interacts physically and functionally with the single-stranded DNA-binding protein.</title>
        <authorList>
            <person name="Gupta R."/>
            <person name="Sharma S."/>
            <person name="Sommers J.A."/>
            <person name="Kenny M.K."/>
            <person name="Cantor S.B."/>
            <person name="Brosh R.M. Jr."/>
        </authorList>
    </citation>
    <scope>FUNCTION</scope>
    <scope>INTERACTION WITH BRIP1</scope>
    <scope>SUBCELLULAR LOCATION</scope>
</reference>
<reference key="20">
    <citation type="journal article" date="2007" name="J. Mol. Biol.">
        <title>Mammalian TIMELESS and Tipin are evolutionarily conserved replication fork-associated factors.</title>
        <authorList>
            <person name="Gotter A.L."/>
            <person name="Suppa C."/>
            <person name="Emanuel B.S."/>
        </authorList>
    </citation>
    <scope>INTERACTION WITH TIMELESS AND TIPIN</scope>
</reference>
<reference key="21">
    <citation type="journal article" date="2007" name="J. Mol. Biol.">
        <title>RPA mediates recombination repair during replication stress and is displaced from DNA by checkpoint signalling in human cells.</title>
        <authorList>
            <person name="Sleeth K.M."/>
            <person name="Sorensen C.S."/>
            <person name="Issaeva N."/>
            <person name="Dziegielewski J."/>
            <person name="Bartek J."/>
            <person name="Helleday T."/>
        </authorList>
    </citation>
    <scope>FUNCTION IN HOMOLOGOUS RECOMBINATION REPAIR</scope>
    <scope>INTERACTION WITH RAD52</scope>
</reference>
<reference key="22">
    <citation type="journal article" date="2007" name="Mol. Cell. Biol.">
        <title>The human Tim/Tipin complex coordinates an Intra-S checkpoint response to UV that slows replication fork displacement.</title>
        <authorList>
            <person name="Uensal-Kacmaz K."/>
            <person name="Chastain P.D."/>
            <person name="Qu P.-P."/>
            <person name="Minoo P."/>
            <person name="Cordeiro-Stone M."/>
            <person name="Sancar A."/>
            <person name="Kaufmann W.K."/>
        </authorList>
    </citation>
    <scope>INTERACTION WITH TIPIN</scope>
</reference>
<reference key="23">
    <citation type="journal article" date="2007" name="Nucleic Acids Res.">
        <title>Replication protein A prevents accumulation of single-stranded telomeric DNA in cells that use alternative lengthening of telomeres.</title>
        <authorList>
            <person name="Grudic A."/>
            <person name="Jul-Larsen A."/>
            <person name="Haring S.J."/>
            <person name="Wold M.S."/>
            <person name="Loenning P.E."/>
            <person name="Bjerkvig R."/>
            <person name="Boee S.O."/>
        </authorList>
    </citation>
    <scope>FUNCTION IN TELOMERE MAINTENANCE</scope>
    <scope>SUBCELLULAR LOCATION</scope>
</reference>
<reference key="24">
    <citation type="journal article" date="2008" name="Proc. Natl. Acad. Sci. U.S.A.">
        <title>A quantitative atlas of mitotic phosphorylation.</title>
        <authorList>
            <person name="Dephoure N."/>
            <person name="Zhou C."/>
            <person name="Villen J."/>
            <person name="Beausoleil S.A."/>
            <person name="Bakalarski C.E."/>
            <person name="Elledge S.J."/>
            <person name="Gygi S.P."/>
        </authorList>
    </citation>
    <scope>IDENTIFICATION BY MASS SPECTROMETRY [LARGE SCALE ANALYSIS]</scope>
    <source>
        <tissue>Cervix carcinoma</tissue>
    </source>
</reference>
<reference key="25">
    <citation type="journal article" date="2009" name="Anal. Chem.">
        <title>Lys-N and trypsin cover complementary parts of the phosphoproteome in a refined SCX-based approach.</title>
        <authorList>
            <person name="Gauci S."/>
            <person name="Helbig A.O."/>
            <person name="Slijper M."/>
            <person name="Krijgsveld J."/>
            <person name="Heck A.J."/>
            <person name="Mohammed S."/>
        </authorList>
    </citation>
    <scope>ACETYLATION [LARGE SCALE ANALYSIS] AT MET-1</scope>
    <scope>IDENTIFICATION BY MASS SPECTROMETRY [LARGE SCALE ANALYSIS]</scope>
</reference>
<reference key="26">
    <citation type="journal article" date="2009" name="Genes Dev.">
        <title>The annealing helicase HARP is recruited to DNA repair sites via an interaction with RPA.</title>
        <authorList>
            <person name="Yusufzai T."/>
            <person name="Kong X."/>
            <person name="Yokomori K."/>
            <person name="Kadonaga J.T."/>
        </authorList>
    </citation>
    <scope>INTERACTION WITH SMARCAL1</scope>
</reference>
<reference key="27">
    <citation type="journal article" date="2009" name="Genes Dev.">
        <title>The annealing helicase SMARCAL1 maintains genome integrity at stalled replication forks.</title>
        <authorList>
            <person name="Bansbach C.E."/>
            <person name="Betous R."/>
            <person name="Lovejoy C.A."/>
            <person name="Glick G.G."/>
            <person name="Cortez D."/>
        </authorList>
    </citation>
    <scope>INTERACTION WITH SMARCAL1</scope>
</reference>
<reference key="28">
    <citation type="journal article" date="2009" name="Genes Dev.">
        <title>The SIOD disorder protein SMARCAL1 is an RPA-interacting protein involved in replication fork restart.</title>
        <authorList>
            <person name="Ciccia A."/>
            <person name="Bredemeyer A.L."/>
            <person name="Sowa M.E."/>
            <person name="Terret M.E."/>
            <person name="Jallepalli P.V."/>
            <person name="Harper J.W."/>
            <person name="Elledge S.J."/>
        </authorList>
    </citation>
    <scope>INTERACTION WITH SMARCAL1</scope>
</reference>
<reference key="29">
    <citation type="journal article" date="2009" name="J. Biol. Chem.">
        <title>An alternative form of replication protein a prevents viral replication in vitro.</title>
        <authorList>
            <person name="Mason A.C."/>
            <person name="Haring S.J."/>
            <person name="Pryor J.M."/>
            <person name="Staloch C.A."/>
            <person name="Gan T.F."/>
            <person name="Wold M.S."/>
        </authorList>
    </citation>
    <scope>FUNCTION AS PART OF THE RPA COMPLEX</scope>
</reference>
<reference key="30">
    <citation type="journal article" date="2010" name="J. Biol. Chem.">
        <title>An alternative form of replication protein a expressed in normal human tissues supports DNA repair.</title>
        <authorList>
            <person name="Kemp M.G."/>
            <person name="Mason A.C."/>
            <person name="Carreira A."/>
            <person name="Reardon J.T."/>
            <person name="Haring S.J."/>
            <person name="Borgstahl G.E."/>
            <person name="Kowalczykowski S.C."/>
            <person name="Sancar A."/>
            <person name="Wold M.S."/>
        </authorList>
    </citation>
    <scope>TISSUE SPECIFICITY</scope>
</reference>
<reference key="31">
    <citation type="journal article" date="2010" name="Nat. Struct. Mol. Biol.">
        <title>A PP4 phosphatase complex dephosphorylates RPA2 to facilitate DNA repair via homologous recombination.</title>
        <authorList>
            <person name="Lee D.H."/>
            <person name="Pan Y."/>
            <person name="Kanner S."/>
            <person name="Sung P."/>
            <person name="Borowiec J.A."/>
            <person name="Chowdhury D."/>
        </authorList>
    </citation>
    <scope>FUNCTION IN DNA REPAIR</scope>
    <scope>PHOSPHORYLATION</scope>
    <scope>DEPHOSPHORYLATION BY PP4</scope>
    <scope>INTERACTION WITH PPP4C; PPP4R2 AND RAD51</scope>
    <scope>SUBCELLULAR LOCATION</scope>
    <scope>MUTAGENESIS OF SER-8; SER-23; SER-29 AND SER-33</scope>
</reference>
<reference key="32">
    <citation type="journal article" date="2010" name="Sci. Signal.">
        <title>Quantitative phosphoproteomics reveals widespread full phosphorylation site occupancy during mitosis.</title>
        <authorList>
            <person name="Olsen J.V."/>
            <person name="Vermeulen M."/>
            <person name="Santamaria A."/>
            <person name="Kumar C."/>
            <person name="Miller M.L."/>
            <person name="Jensen L.J."/>
            <person name="Gnad F."/>
            <person name="Cox J."/>
            <person name="Jensen T.S."/>
            <person name="Nigg E.A."/>
            <person name="Brunak S."/>
            <person name="Mann M."/>
        </authorList>
    </citation>
    <scope>ACETYLATION [LARGE SCALE ANALYSIS] AT MET-1</scope>
    <scope>PHOSPHORYLATION [LARGE SCALE ANALYSIS] AT SER-23 AND SER-29</scope>
    <scope>IDENTIFICATION BY MASS SPECTROMETRY [LARGE SCALE ANALYSIS]</scope>
    <source>
        <tissue>Cervix carcinoma</tissue>
    </source>
</reference>
<reference key="33">
    <citation type="journal article" date="2011" name="BMC Syst. Biol.">
        <title>Initial characterization of the human central proteome.</title>
        <authorList>
            <person name="Burkard T.R."/>
            <person name="Planyavsky M."/>
            <person name="Kaupe I."/>
            <person name="Breitwieser F.P."/>
            <person name="Buerckstuemmer T."/>
            <person name="Bennett K.L."/>
            <person name="Superti-Furga G."/>
            <person name="Colinge J."/>
        </authorList>
    </citation>
    <scope>IDENTIFICATION BY MASS SPECTROMETRY [LARGE SCALE ANALYSIS]</scope>
</reference>
<reference key="34">
    <citation type="journal article" date="2011" name="J. Biol. Chem.">
        <title>E3 ligase RFWD3 participates in replication checkpoint control.</title>
        <authorList>
            <person name="Gong Z."/>
            <person name="Chen J."/>
        </authorList>
    </citation>
    <scope>FUNCTION IN REPLICATION CHECKPOINT</scope>
    <scope>INTERACTION WITH RFWD3</scope>
    <scope>SUBCELLULAR LOCATION</scope>
</reference>
<reference key="35">
    <citation type="journal article" date="2011" name="J. Biol. Chem.">
        <title>RING finger and WD repeat domain 3 (RFWD3) associates with replication protein A (RPA) and facilitates RPA-mediated DNA damage response.</title>
        <authorList>
            <person name="Liu S."/>
            <person name="Chu J."/>
            <person name="Yucer N."/>
            <person name="Leng M."/>
            <person name="Wang S.Y."/>
            <person name="Chen B.P."/>
            <person name="Hittelman W.N."/>
            <person name="Wang Y."/>
        </authorList>
    </citation>
    <scope>INTERACTION WITH RFWD3</scope>
    <scope>SUBCELLULAR LOCATION</scope>
    <scope>PHOSPHORYLATION AT THR-21</scope>
</reference>
<reference key="36">
    <citation type="journal article" date="2011" name="PLoS ONE">
        <title>DNA-PK-dependent RPA2 hyperphosphorylation facilitates DNA repair and suppresses sister chromatid exchange.</title>
        <authorList>
            <person name="Liaw H."/>
            <person name="Lee D."/>
            <person name="Myung K."/>
        </authorList>
    </citation>
    <scope>PHOSPHORYLATION AT SER-4 AND SER-8 BY PRKDC</scope>
    <scope>MUTAGENESIS OF SER-4 AND SER-8</scope>
</reference>
<reference key="37">
    <citation type="journal article" date="2012" name="DNA Repair">
        <title>The UNG2 Arg88Cys variant abrogates RPA-mediated recruitment of UNG2 to single-stranded DNA.</title>
        <authorList>
            <person name="Torseth K."/>
            <person name="Doseth B."/>
            <person name="Hagen L."/>
            <person name="Olaisen C."/>
            <person name="Liabakk N.B."/>
            <person name="Graesmann H."/>
            <person name="Durandy A."/>
            <person name="Otterlei M."/>
            <person name="Krokan H.E."/>
            <person name="Kavli B."/>
            <person name="Slupphaug G."/>
        </authorList>
    </citation>
    <scope>INTERACTION WITH UNG</scope>
</reference>
<reference key="38">
    <citation type="journal article" date="2012" name="FEBS Lett.">
        <title>4E-BP3 regulates eIF4E-mediated nuclear mRNA export and interacts with replication protein A2.</title>
        <authorList>
            <person name="Chen C.C."/>
            <person name="Lee J.C."/>
            <person name="Chang M.C."/>
        </authorList>
    </citation>
    <scope>INTERACTION WITH EIF4EBP3</scope>
</reference>
<reference key="39">
    <citation type="journal article" date="2013" name="Carcinogenesis">
        <title>Translational regulation of RPA2 via internal ribosomal entry site and by eIF3a.</title>
        <authorList>
            <person name="Yin J.Y."/>
            <person name="Dong Z.Z."/>
            <person name="Liu R.Y."/>
            <person name="Chen J."/>
            <person name="Liu Z.Q."/>
            <person name="Zhang J.T."/>
        </authorList>
    </citation>
    <scope>INDUCTION BY DNA DAMAGE</scope>
</reference>
<reference key="40">
    <citation type="journal article" date="2013" name="J. Cell Biol.">
        <title>FBH1 promotes DNA double-strand breakage and apoptosis in response to DNA replication stress.</title>
        <authorList>
            <person name="Jeong Y.T."/>
            <person name="Rossi M."/>
            <person name="Cermak L."/>
            <person name="Saraf A."/>
            <person name="Florens L."/>
            <person name="Washburn M.P."/>
            <person name="Sung P."/>
            <person name="Schildkraut C.L."/>
            <person name="Schildkraut C."/>
            <person name="Pagano M."/>
        </authorList>
    </citation>
    <scope>INTERACTION WITH FBH1</scope>
</reference>
<reference key="41">
    <citation type="journal article" date="2014" name="Mol. Cell">
        <title>PRP19 transforms into a sensor of RPA-ssDNA after DNA damage and drives ATR activation via a ubiquitin-mediated circuitry.</title>
        <authorList>
            <person name="Marechal A."/>
            <person name="Li J.M."/>
            <person name="Ji X.Y."/>
            <person name="Wu C.S."/>
            <person name="Yazinski S.A."/>
            <person name="Nguyen H.D."/>
            <person name="Liu S."/>
            <person name="Jimenez A.E."/>
            <person name="Jin J."/>
            <person name="Zou L."/>
        </authorList>
    </citation>
    <scope>FUNCTION</scope>
    <scope>INTERACTION WITH PRPF19</scope>
    <scope>UBIQUITINATION BY PRPF19</scope>
</reference>
<reference key="42">
    <citation type="journal article" date="2015" name="Mol. Cell">
        <title>RFWD3-dependent ubiquitination of RPA regulates repair at stalled replication forks.</title>
        <authorList>
            <person name="Elia A.E."/>
            <person name="Wang D.C."/>
            <person name="Willis N.A."/>
            <person name="Boardman A.P."/>
            <person name="Hajdu I."/>
            <person name="Adeyemi R.O."/>
            <person name="Lowry E."/>
            <person name="Gygi S.P."/>
            <person name="Scully R."/>
            <person name="Elledge S.J."/>
        </authorList>
    </citation>
    <scope>UBIQUITINATION AT LYS-37 AND LYS-38</scope>
    <scope>PHOSPHORYLATION AT SER-4; SER-8; THR-21 AND SER-33</scope>
    <scope>MUTAGENESIS OF 37-LYS-LYS-38</scope>
</reference>
<reference key="43">
    <citation type="journal article" date="2016" name="J. Biol. Chem.">
        <title>Ewing Tumor-associated Antigen 1 interacts with replication protein A to promote restart of stalled replication forks.</title>
        <authorList>
            <person name="Feng S."/>
            <person name="Zhao Y."/>
            <person name="Xu Y."/>
            <person name="Ning S."/>
            <person name="Huo W."/>
            <person name="Hou M."/>
            <person name="Gao G."/>
            <person name="Ji J."/>
            <person name="Guo R."/>
            <person name="Xu D."/>
        </authorList>
    </citation>
    <scope>INTERACTION WITH ETAA1</scope>
</reference>
<reference key="44">
    <citation type="journal article" date="2016" name="Nat. Cell Biol.">
        <title>ETAA1 acts at stalled replication forks to maintain genome integrity.</title>
        <authorList>
            <person name="Bass T.E."/>
            <person name="Luzwick J.W."/>
            <person name="Kavanaugh G."/>
            <person name="Carroll C."/>
            <person name="Dungrawala H."/>
            <person name="Glick G.G."/>
            <person name="Feldkamp M.D."/>
            <person name="Putney R."/>
            <person name="Chazin W.J."/>
            <person name="Cortez D."/>
        </authorList>
    </citation>
    <scope>FUNCTION</scope>
    <scope>INTERACTION WITH ETAA1</scope>
</reference>
<reference key="45">
    <citation type="journal article" date="2016" name="Nat. Cell Biol.">
        <title>Activation of the ATR kinase by the RPA-binding protein ETAA1.</title>
        <authorList>
            <person name="Haahr P."/>
            <person name="Hoffmann S."/>
            <person name="Tollenaere M.A."/>
            <person name="Ho T."/>
            <person name="Toledo L.I."/>
            <person name="Mann M."/>
            <person name="Bekker-Jensen S."/>
            <person name="Raeschle M."/>
            <person name="Mailand N."/>
        </authorList>
    </citation>
    <scope>FUNCTION</scope>
    <scope>INTERACTION WITH ETAA1</scope>
</reference>
<reference key="46">
    <citation type="journal article" date="2017" name="Mol. Cell">
        <title>RPA-mediated recruitment of the E3 ligase RFWD3 is vital for interstrand crosslink repair and human health.</title>
        <authorList>
            <person name="Feeney L."/>
            <person name="Munoz I.M."/>
            <person name="Lachaud C."/>
            <person name="Toth R."/>
            <person name="Appleton P.L."/>
            <person name="Schindler D."/>
            <person name="Rouse J."/>
        </authorList>
    </citation>
    <scope>INTERACTION WITH RFWD3</scope>
    <scope>MUTAGENESIS OF PHE-248; GLU-252; GLY-253 AND HIS-254</scope>
</reference>
<reference key="47">
    <citation type="journal article" date="2018" name="Mol. Cell">
        <title>Removal of RTF2 from Stalled Replisomes Promotes Maintenance of Genome Integrity.</title>
        <authorList>
            <person name="Kottemann M.C."/>
            <person name="Conti B.A."/>
            <person name="Lach F.P."/>
            <person name="Smogorzewska A."/>
        </authorList>
    </citation>
    <scope>INTERACTION WITH DDI2</scope>
</reference>
<reference key="48">
    <citation type="journal article" date="1999" name="EMBO J.">
        <title>The crystal structure of the complex of replication protein A subunits RPA32 and RPA14 reveals a mechanism for single-stranded DNA binding.</title>
        <authorList>
            <person name="Bochkarev A."/>
            <person name="Bochkareva E."/>
            <person name="Frappier L."/>
            <person name="Edwards A.M."/>
        </authorList>
    </citation>
    <scope>X-RAY CRYSTALLOGRAPHY (2.5 ANGSTROMS) OF 43-171 IN COMPLEX WITH RPA1 AND RPA3</scope>
</reference>
<reference key="49">
    <citation type="journal article" date="2000" name="Cell">
        <title>Structural basis for the recognition of DNA repair proteins UNG2, XPA, and RAD52 by replication factor RPA.</title>
        <authorList>
            <person name="Mer G."/>
            <person name="Bochkarev A."/>
            <person name="Gupta R."/>
            <person name="Bochkareva E."/>
            <person name="Frappier L."/>
            <person name="Ingles C.J."/>
            <person name="Edwards A.M."/>
            <person name="Chazin W.J."/>
        </authorList>
    </citation>
    <scope>STRUCTURE BY NMR OF 172-270</scope>
    <scope>INTERACTION WITH RAD52; UNG AND XPA</scope>
    <scope>REGION</scope>
</reference>
<reference key="50">
    <citation type="journal article" date="2002" name="EMBO J.">
        <title>Structure of the RPA trimerization core and its role in the multistep DNA-binding mechanism of RPA.</title>
        <authorList>
            <person name="Bochkareva E."/>
            <person name="Korolev S."/>
            <person name="Lees-Miller S.P."/>
            <person name="Bochkarev A."/>
        </authorList>
    </citation>
    <scope>X-RAY CRYSTALLOGRAPHY (2.8 ANGSTROMS) OF 44-171</scope>
</reference>
<reference evidence="45" key="51">
    <citation type="journal article" date="2014" name="FEBS J.">
        <title>Structure of RPA32 bound to the N-terminus of SMARCAL1 redefines the binding interface between RPA32 and its interacting proteins.</title>
        <authorList>
            <person name="Xie S."/>
            <person name="Lu Y."/>
            <person name="Jakoncic J."/>
            <person name="Sun H."/>
            <person name="Xia J."/>
            <person name="Qian C."/>
        </authorList>
    </citation>
    <scope>X-RAY CRYSTALLOGRAPHY (1.95 ANGSTROMS) OF 1-270 IN COMPLEX WITH SMARCAL1</scope>
    <scope>INTERACTION WITH SMARCAL1</scope>
</reference>
<accession>P15927</accession>
<accession>Q52II0</accession>
<accession>Q5TEI9</accession>
<accession>Q5TEJ5</accession>
<evidence type="ECO:0000256" key="1">
    <source>
        <dbReference type="SAM" id="MobiDB-lite"/>
    </source>
</evidence>
<evidence type="ECO:0000269" key="2">
    <source>
    </source>
</evidence>
<evidence type="ECO:0000269" key="3">
    <source>
    </source>
</evidence>
<evidence type="ECO:0000269" key="4">
    <source>
    </source>
</evidence>
<evidence type="ECO:0000269" key="5">
    <source>
    </source>
</evidence>
<evidence type="ECO:0000269" key="6">
    <source>
    </source>
</evidence>
<evidence type="ECO:0000269" key="7">
    <source>
    </source>
</evidence>
<evidence type="ECO:0000269" key="8">
    <source>
    </source>
</evidence>
<evidence type="ECO:0000269" key="9">
    <source>
    </source>
</evidence>
<evidence type="ECO:0000269" key="10">
    <source>
    </source>
</evidence>
<evidence type="ECO:0000269" key="11">
    <source>
    </source>
</evidence>
<evidence type="ECO:0000269" key="12">
    <source>
    </source>
</evidence>
<evidence type="ECO:0000269" key="13">
    <source>
    </source>
</evidence>
<evidence type="ECO:0000269" key="14">
    <source>
    </source>
</evidence>
<evidence type="ECO:0000269" key="15">
    <source>
    </source>
</evidence>
<evidence type="ECO:0000269" key="16">
    <source>
    </source>
</evidence>
<evidence type="ECO:0000269" key="17">
    <source>
    </source>
</evidence>
<evidence type="ECO:0000269" key="18">
    <source>
    </source>
</evidence>
<evidence type="ECO:0000269" key="19">
    <source>
    </source>
</evidence>
<evidence type="ECO:0000269" key="20">
    <source>
    </source>
</evidence>
<evidence type="ECO:0000269" key="21">
    <source>
    </source>
</evidence>
<evidence type="ECO:0000269" key="22">
    <source>
    </source>
</evidence>
<evidence type="ECO:0000269" key="23">
    <source>
    </source>
</evidence>
<evidence type="ECO:0000269" key="24">
    <source>
    </source>
</evidence>
<evidence type="ECO:0000269" key="25">
    <source>
    </source>
</evidence>
<evidence type="ECO:0000269" key="26">
    <source>
    </source>
</evidence>
<evidence type="ECO:0000269" key="27">
    <source>
    </source>
</evidence>
<evidence type="ECO:0000269" key="28">
    <source>
    </source>
</evidence>
<evidence type="ECO:0000269" key="29">
    <source>
    </source>
</evidence>
<evidence type="ECO:0000269" key="30">
    <source>
    </source>
</evidence>
<evidence type="ECO:0000269" key="31">
    <source>
    </source>
</evidence>
<evidence type="ECO:0000269" key="32">
    <source>
    </source>
</evidence>
<evidence type="ECO:0000269" key="33">
    <source>
    </source>
</evidence>
<evidence type="ECO:0000269" key="34">
    <source>
    </source>
</evidence>
<evidence type="ECO:0000269" key="35">
    <source>
    </source>
</evidence>
<evidence type="ECO:0000269" key="36">
    <source>
    </source>
</evidence>
<evidence type="ECO:0000269" key="37">
    <source>
    </source>
</evidence>
<evidence type="ECO:0000269" key="38">
    <source>
    </source>
</evidence>
<evidence type="ECO:0000269" key="39">
    <source>
    </source>
</evidence>
<evidence type="ECO:0000269" key="40">
    <source>
    </source>
</evidence>
<evidence type="ECO:0000269" key="41">
    <source>
    </source>
</evidence>
<evidence type="ECO:0000269" key="42">
    <source ref="3"/>
</evidence>
<evidence type="ECO:0000305" key="43"/>
<evidence type="ECO:0000305" key="44">
    <source>
    </source>
</evidence>
<evidence type="ECO:0007744" key="45">
    <source>
        <dbReference type="PDB" id="4MQV"/>
    </source>
</evidence>
<evidence type="ECO:0007744" key="46">
    <source>
    </source>
</evidence>
<evidence type="ECO:0007744" key="47">
    <source>
    </source>
</evidence>
<evidence type="ECO:0007829" key="48">
    <source>
        <dbReference type="PDB" id="1DPU"/>
    </source>
</evidence>
<evidence type="ECO:0007829" key="49">
    <source>
        <dbReference type="PDB" id="1L1O"/>
    </source>
</evidence>
<evidence type="ECO:0007829" key="50">
    <source>
        <dbReference type="PDB" id="1QUQ"/>
    </source>
</evidence>
<evidence type="ECO:0007829" key="51">
    <source>
        <dbReference type="PDB" id="3KDF"/>
    </source>
</evidence>
<evidence type="ECO:0007829" key="52">
    <source>
        <dbReference type="PDB" id="4OU0"/>
    </source>
</evidence>
<gene>
    <name type="primary">RPA2</name>
    <name type="synonym">REPA2</name>
    <name type="synonym">RPA32</name>
    <name type="synonym">RPA34</name>
</gene>
<comment type="function">
    <text evidence="7 10 11 12 13 17 18 25 26 34 35 37 40 41">As part of the heterotrimeric replication protein A complex (RPA/RP-A), binds and stabilizes single-stranded DNA intermediates that form during DNA replication or upon DNA stress. It prevents their reannealing and in parallel, recruits and activates different proteins and complexes involved in DNA metabolism. Thereby, it plays an essential role both in DNA replication and the cellular response to DNA damage. In the cellular response to DNA damage, the RPA complex controls DNA repair and DNA damage checkpoint activation. Through recruitment of ATRIP activates the ATR kinase a master regulator of the DNA damage response. It is required for the recruitment of the DNA double-strand break repair factors RAD51 and RAD52 to chromatin in response to DNA damage. Also recruits to sites of DNA damage proteins like XPA and XPG that are involved in nucleotide excision repair and is required for this mechanism of DNA repair. Also plays a role in base excision repair (BER) probably through interaction with UNG. Also recruits SMARCAL1/HARP, which is involved in replication fork restart, to sites of DNA damage. May also play a role in telomere maintenance. RPA stimulates 5'-3' helicase activity of BRIP1/FANCJ (PubMed:17596542).</text>
</comment>
<comment type="subunit">
    <text evidence="2 3 4 8 9 10 11 14 15 16 17 18 19 21 22 23 25 26 27 28 29 30 31 32 33 35 37">Component of the replication protein A complex (RPA/RP-A), a heterotrimeric complex composed of RPA1, RPA2 and RPA3 (PubMed:10449415, PubMed:19116208, PubMed:2406247). Interacts with PRPF19; the PRP19-CDC5L complex is recruited to the sites of DNA repair where it ubiquitinates the replication protein A complex (RPA) (PubMed:24332808). Interacts with SERTAD3 (PubMed:10982866). Interacts with TIPIN (PubMed:17141802, PubMed:17296725). Interacts with TIMELESS (PubMed:17141802). Interacts with PPP4R2; the interaction is direct, DNA damage-dependent and mediates the recruitment of the PP4 catalytic subunit PPP4C (PubMed:20154705). Interacts (hyperphosphorylated) with RAD51 (PubMed:20154705). Interacts with SMARCAL1; the interaction is direct and mediates the recruitment to the RPA complex of SMARCAL1 (PubMed:19793861, PubMed:19793862, PubMed:19793863, PubMed:24910198). Interacts with RAD52 and XPA; those interactions are direct and associate RAD52 and XPA to the RPA complex (PubMed:11081631, PubMed:17765923, PubMed:7700386, PubMed:8702565). Interacts with FBH1 (PubMed:23319600). Interacts with ETAA1; the interaction is direct and promotes ETAA1 recruitment at stalled replication forks (PubMed:27601467, PubMed:27723717, PubMed:27723720). Interacts with RFWD3 (PubMed:21504906, PubMed:21558276, PubMed:26474068, PubMed:28575657). Interacts with DDI2 (PubMed:29290612). Interacts (in unphosphorylated form via N-terminus) with EIF4EBP3; the interaction enhances EIF4EBP3-mediated inhibition of EIF4E-mediated mRNA nuclear export (PubMed:22684010). Interacts with BRIP1/FANCJ via the RPA1 subunit; following DNA damage they colocalize in foci in the nucleus (PubMed:17596542). Interacts with nuclear UNG (isoform 2); this interaction mediates UNG recruitment to RPA-coated single-stranded DNA at stalled replication forks.</text>
</comment>
<comment type="interaction">
    <interactant intactId="EBI-621404">
        <id>P15927</id>
    </interactant>
    <interactant intactId="EBI-395261">
        <id>P24863</id>
        <label>CCNC</label>
    </interactant>
    <organismsDiffer>false</organismsDiffer>
    <experiments>3</experiments>
</comment>
<comment type="interaction">
    <interactant intactId="EBI-621404">
        <id>P15927</id>
    </interactant>
    <interactant intactId="EBI-374969">
        <id>O75419</id>
        <label>CDC45</label>
    </interactant>
    <organismsDiffer>false</organismsDiffer>
    <experiments>4</experiments>
</comment>
<comment type="interaction">
    <interactant intactId="EBI-621404">
        <id>P15927</id>
    </interactant>
    <interactant intactId="EBI-746950">
        <id>O60516</id>
        <label>EIF4EBP3</label>
    </interactant>
    <organismsDiffer>false</organismsDiffer>
    <experiments>3</experiments>
</comment>
<comment type="interaction">
    <interactant intactId="EBI-621404">
        <id>P15927</id>
    </interactant>
    <interactant intactId="EBI-354056">
        <id>P04406</id>
        <label>GAPDH</label>
    </interactant>
    <organismsDiffer>false</organismsDiffer>
    <experiments>2</experiments>
</comment>
<comment type="interaction">
    <interactant intactId="EBI-621404">
        <id>P15927</id>
    </interactant>
    <interactant intactId="EBI-15866483">
        <id>P49643-1</id>
        <label>PRIM2</label>
    </interactant>
    <organismsDiffer>false</organismsDiffer>
    <experiments>3</experiments>
</comment>
<comment type="interaction">
    <interactant intactId="EBI-621404">
        <id>P15927</id>
    </interactant>
    <interactant intactId="EBI-2129159">
        <id>Q6PCD5</id>
        <label>RFWD3</label>
    </interactant>
    <organismsDiffer>false</organismsDiffer>
    <experiments>3</experiments>
</comment>
<comment type="interaction">
    <interactant intactId="EBI-621404">
        <id>P15927</id>
    </interactant>
    <interactant intactId="EBI-621389">
        <id>P27694</id>
        <label>RPA1</label>
    </interactant>
    <organismsDiffer>false</organismsDiffer>
    <experiments>20</experiments>
</comment>
<comment type="interaction">
    <interactant intactId="EBI-621404">
        <id>P15927</id>
    </interactant>
    <interactant intactId="EBI-621428">
        <id>P35244</id>
        <label>RPA3</label>
    </interactant>
    <organismsDiffer>false</organismsDiffer>
    <experiments>14</experiments>
</comment>
<comment type="interaction">
    <interactant intactId="EBI-621404">
        <id>P15927</id>
    </interactant>
    <interactant intactId="EBI-748621">
        <id>Q9UJW9</id>
        <label>SERTAD3</label>
    </interactant>
    <organismsDiffer>false</organismsDiffer>
    <experiments>5</experiments>
</comment>
<comment type="interaction">
    <interactant intactId="EBI-621404">
        <id>P15927</id>
    </interactant>
    <interactant intactId="EBI-5457961">
        <id>Q9NZC9</id>
        <label>SMARCAL1</label>
    </interactant>
    <organismsDiffer>false</organismsDiffer>
    <experiments>14</experiments>
</comment>
<comment type="interaction">
    <interactant intactId="EBI-621404">
        <id>P15927</id>
    </interactant>
    <interactant intactId="EBI-2515360">
        <id>Q9BVW5</id>
        <label>TIPIN</label>
    </interactant>
    <organismsDiffer>false</organismsDiffer>
    <experiments>4</experiments>
</comment>
<comment type="interaction">
    <interactant intactId="EBI-621404">
        <id>P15927</id>
    </interactant>
    <interactant intactId="EBI-1025947">
        <id>P13051</id>
        <label>UNG</label>
    </interactant>
    <organismsDiffer>false</organismsDiffer>
    <experiments>6</experiments>
</comment>
<comment type="interaction">
    <interactant intactId="EBI-621404">
        <id>P15927</id>
    </interactant>
    <interactant intactId="EBI-295222">
        <id>P23025</id>
        <label>XPA</label>
    </interactant>
    <organismsDiffer>false</organismsDiffer>
    <experiments>9</experiments>
</comment>
<comment type="subcellular location">
    <subcellularLocation>
        <location evidence="3 5 10 17 18">Nucleus</location>
    </subcellularLocation>
    <subcellularLocation>
        <location evidence="5">Nucleus</location>
        <location evidence="5">PML body</location>
    </subcellularLocation>
    <text evidence="5">Redistributes to discrete nuclear foci upon DNA damage in an ATR-dependent manner.</text>
</comment>
<comment type="alternative products">
    <event type="alternative splicing"/>
    <isoform>
        <id>P15927-1</id>
        <name>1</name>
        <sequence type="displayed"/>
    </isoform>
    <isoform>
        <id>P15927-2</id>
        <name>2</name>
        <sequence type="described" ref="VSP_017201"/>
    </isoform>
    <isoform>
        <id>P15927-3</id>
        <name>3</name>
        <sequence type="described" ref="VSP_017202"/>
    </isoform>
</comment>
<comment type="induction">
    <text evidence="24">Translationally up-regulated in response to DNA damage (at protein level).</text>
</comment>
<comment type="PTM">
    <text evidence="5 6 17 19 20 28 36 38 39">Differentially phosphorylated throughout the cell cycle, becoming phosphorylated at the G1-S transition and dephosphorylated in late mitosis. Mainly phosphorylated at Ser-23 and Ser-29, by cyclin A-CDK2 and cyclin B-CDK1, respectively during DNA replication and mitosis. Dephosphorylation may require the serine/threonine-protein phosphatase 4. Phosphorylation at Ser-23 and Ser-29 is a prerequisite for further phosphorylation. Becomes hyperphosphorylated on additional residues including Ser-4, Ser-8, Thr-21 and Ser-33 in response to DNA damage. Hyperphosphorylation is mediated by ATM, ATR and PRKDC. Primarily recruited to DNA repair nuclear foci as a hypophosphorylated form it undergoes subsequent hyperphosphorylation, catalyzed by ATR. Hyperphosphorylation is required for RAD51 recruitment to chromatin and efficient DNA repair. Phosphorylation at Thr-21 depends upon RFWD3 presence.</text>
</comment>
<comment type="PTM">
    <text evidence="26 28">DNA damage-induced 'Lys-63'-linked polyubiquitination by PRPF19 mediates ATRIP recruitment to the RPA complex at sites of DNA damage and activation of ATR (PubMed:24332808). Ubiquitinated by RFWD3 at stalled replication forks in response to DNA damage: ubiquitination by RFWD3 does not lead to degradation by the proteasome and promotes removal of the RPA complex from stalled replication forks, promoting homologous recombination (PubMed:26474068).</text>
</comment>
<comment type="similarity">
    <text evidence="43">Belongs to the replication factor A protein 2 family.</text>
</comment>
<comment type="online information" name="Atlas of Genetics and Cytogenetics in Oncology and Haematology">
    <link uri="https://atlasgeneticsoncology.org/gene/42146/RPA2"/>
</comment>
<feature type="chain" id="PRO_0000097270" description="Replication protein A 32 kDa subunit">
    <location>
        <begin position="1"/>
        <end position="270"/>
    </location>
</feature>
<feature type="DNA-binding region" description="OB">
    <location>
        <begin position="74"/>
        <end position="148"/>
    </location>
</feature>
<feature type="region of interest" description="Disordered" evidence="1">
    <location>
        <begin position="21"/>
        <end position="41"/>
    </location>
</feature>
<feature type="region of interest" description="Interaction with RAD52, TIPIN, UNG and XPA" evidence="4">
    <location>
        <begin position="187"/>
        <end position="270"/>
    </location>
</feature>
<feature type="modified residue" description="N-acetylmethionine" evidence="38 46 47">
    <location>
        <position position="1"/>
    </location>
</feature>
<feature type="modified residue" description="Phosphoserine; by PRKDC" evidence="20 28">
    <location>
        <position position="4"/>
    </location>
</feature>
<feature type="modified residue" description="Phosphoserine; by PRKDC" evidence="20 28">
    <location>
        <position position="8"/>
    </location>
</feature>
<feature type="modified residue" description="Phosphothreonine; by PRKDC" evidence="19 28 38 39">
    <location>
        <position position="21"/>
    </location>
</feature>
<feature type="modified residue" description="Phosphoserine; by CDK2" evidence="6 36 39 47">
    <location>
        <position position="23"/>
    </location>
</feature>
<feature type="modified residue" description="Phosphoserine; by CDK1" evidence="6 36 38 39 47">
    <location>
        <position position="29"/>
    </location>
</feature>
<feature type="modified residue" description="Phosphoserine; by PRKDC" evidence="28 38 39">
    <location>
        <position position="33"/>
    </location>
</feature>
<feature type="cross-link" description="Glycyl lysine isopeptide (Lys-Gly) (interchain with G-Cter in ubiquitin)" evidence="44">
    <location>
        <position position="37"/>
    </location>
</feature>
<feature type="cross-link" description="Glycyl lysine isopeptide (Lys-Gly) (interchain with G-Cter in ubiquitin)" evidence="44">
    <location>
        <position position="38"/>
    </location>
</feature>
<feature type="splice variant" id="VSP_017201" description="In isoform 2." evidence="43">
    <original>MWNS</original>
    <variation>MGRGDRNKRSIR</variation>
    <location>
        <begin position="1"/>
        <end position="4"/>
    </location>
</feature>
<feature type="splice variant" id="VSP_017202" description="In isoform 3." evidence="43">
    <original>MWNS</original>
    <variation>MWNSNDGGAGWRRKRIAGGFSKRASLGSERRVVAGEEGRERSWGVWGSPAGRRRGRLGRLGQCLKGRSLREPAGFSEAWDVAQALILLFKTG</variation>
    <location>
        <begin position="1"/>
        <end position="4"/>
    </location>
</feature>
<feature type="sequence variant" id="VAR_023300" description="In dbSNP:rs28988896." evidence="42">
    <original>Y</original>
    <variation>S</variation>
    <location>
        <position position="14"/>
    </location>
</feature>
<feature type="sequence variant" id="VAR_023301" description="In dbSNP:rs28988897." evidence="42">
    <original>G</original>
    <variation>R</variation>
    <location>
        <position position="15"/>
    </location>
</feature>
<feature type="sequence variant" id="VAR_023302" description="In dbSNP:rs28904899." evidence="42">
    <original>N</original>
    <variation>S</variation>
    <location>
        <position position="203"/>
    </location>
</feature>
<feature type="mutagenesis site" description="Increased RAD51 foci formation and homologous recombination efficiency at DNA double-strand breaks; when associated with A-8." evidence="20">
    <original>S</original>
    <variation>A</variation>
    <location>
        <position position="4"/>
    </location>
</feature>
<feature type="mutagenesis site" description="Increased RAD51 foci formation and homologous recombination efficiency at DNA double-strand breaks; when associated with A-4." evidence="17 20">
    <original>S</original>
    <variation>A</variation>
    <location>
        <position position="8"/>
    </location>
</feature>
<feature type="mutagenesis site" description="Lower homologous recombination efficiency following DNA double strand break. Impaired DNA synthesis following DNA damage; when associated with D-33. No effect on cell-cycle progression, nor DNA synthesis in undamaged cells; when associated with D-23; D-29 and D-33. Impaired DNA double strand breaks repair; when associated with D-23; D-29 and D-33. Extended DNA damage-induced G2-M checkpoint; when associated with D-23; D-29 and D-33. Preferentially interacts with RAD51; when associated with D-23; D-29 and D-33." evidence="17 20">
    <original>S</original>
    <variation>D</variation>
    <location>
        <position position="8"/>
    </location>
</feature>
<feature type="mutagenesis site" description="No effect on DNA synthesis following DNA damage; when associated with D-29. No effect on cell-cycle progression, nor DNA synthesis in undamaged cells; when associated with D-8; D-29 and D-33. Impaired DNA double strand breaks repair; when associated with D-8; D-29 and D-33. Extended DNA damage-induced G2-M checkpoint; when associated with D-8; D-29 and D-33. Preferentially interacts with RAD51; when associated with D-8; D-29 and D-33." evidence="17">
    <original>S</original>
    <variation>D</variation>
    <location>
        <position position="23"/>
    </location>
</feature>
<feature type="mutagenesis site" description="Reduces phosphorylation by CDK1." evidence="17 38">
    <original>S</original>
    <variation>A</variation>
    <location>
        <position position="29"/>
    </location>
</feature>
<feature type="mutagenesis site" description="No effect on DNA synthesis following DNA damage; when associated with D-23. No effect on cell-cycle progression, nor DNA synthesis in undamaged cells; when associated with D-8; D-23 and D-33. Impaired DNA double strand breaks repair; when associated with D-8; D-23 and D-33. Extended DNA damage-induced G2-M checkpoint; when associated with D-8; D-23 and D-33. Preferentially interacts with RAD51; when associated with D-8; D-23 and D-33." evidence="17 38">
    <original>S</original>
    <variation>D</variation>
    <location>
        <position position="29"/>
    </location>
</feature>
<feature type="mutagenesis site" description="Lower homologous recombination efficiency following DNA double strand break. Impaired DNA synthesis following DNA damage; when associated with D-8. No effect on cell-cycle progression, nor DNA synthesis in undamaged cells; when associated with D-8; D-23 and D-29. Impaired DNA double strand breaks repair; when associated with D-8; D-23 and D-29. Extended DNA damage-induced G2-M checkpoint; when associated with D-8; D-23 and D-29. Preferentially interacts with RAD51; when associated with D-8; D-23 and D-29." evidence="17">
    <original>S</original>
    <variation>D</variation>
    <location>
        <position position="33"/>
    </location>
</feature>
<feature type="mutagenesis site" description="Impaired ubiquitination without affecting homologous recombination." evidence="28">
    <original>KK</original>
    <variation>RR</variation>
    <location>
        <begin position="37"/>
        <end position="38"/>
    </location>
</feature>
<feature type="mutagenesis site" description="Abolishes interaction with RFWD3, leading to impair DNA interstrand cross-links (ICL) repair." evidence="32">
    <original>F</original>
    <variation>A</variation>
    <location>
        <position position="248"/>
    </location>
</feature>
<feature type="mutagenesis site" description="Abolishes interaction with RFWD3, leading to impair DNA interstrand cross-links (ICL) repair." evidence="32">
    <original>E</original>
    <variation>A</variation>
    <location>
        <position position="252"/>
    </location>
</feature>
<feature type="mutagenesis site" description="Does not affect interaction with RFWD3." evidence="32">
    <original>G</original>
    <variation>A</variation>
    <location>
        <position position="253"/>
    </location>
</feature>
<feature type="mutagenesis site" description="Abolishes interaction with RFWD3, leading to impair DNA interstrand cross-links (ICL) repair." evidence="32">
    <original>H</original>
    <variation>A</variation>
    <location>
        <position position="254"/>
    </location>
</feature>
<feature type="strand" evidence="49">
    <location>
        <begin position="46"/>
        <end position="48"/>
    </location>
</feature>
<feature type="helix" evidence="51">
    <location>
        <begin position="51"/>
        <end position="55"/>
    </location>
</feature>
<feature type="strand" evidence="51">
    <location>
        <begin position="58"/>
        <end position="62"/>
    </location>
</feature>
<feature type="strand" evidence="51">
    <location>
        <begin position="64"/>
        <end position="66"/>
    </location>
</feature>
<feature type="strand" evidence="50">
    <location>
        <begin position="69"/>
        <end position="71"/>
    </location>
</feature>
<feature type="strand" evidence="51">
    <location>
        <begin position="73"/>
        <end position="85"/>
    </location>
</feature>
<feature type="strand" evidence="51">
    <location>
        <begin position="87"/>
        <end position="95"/>
    </location>
</feature>
<feature type="strand" evidence="51">
    <location>
        <begin position="97"/>
        <end position="100"/>
    </location>
</feature>
<feature type="strand" evidence="51">
    <location>
        <begin position="102"/>
        <end position="107"/>
    </location>
</feature>
<feature type="strand" evidence="51">
    <location>
        <begin position="125"/>
        <end position="135"/>
    </location>
</feature>
<feature type="strand" evidence="51">
    <location>
        <begin position="138"/>
        <end position="148"/>
    </location>
</feature>
<feature type="helix" evidence="51">
    <location>
        <begin position="153"/>
        <end position="171"/>
    </location>
</feature>
<feature type="helix" evidence="52">
    <location>
        <begin position="207"/>
        <end position="218"/>
    </location>
</feature>
<feature type="turn" evidence="48">
    <location>
        <begin position="222"/>
        <end position="224"/>
    </location>
</feature>
<feature type="helix" evidence="52">
    <location>
        <begin position="227"/>
        <end position="233"/>
    </location>
</feature>
<feature type="helix" evidence="52">
    <location>
        <begin position="239"/>
        <end position="252"/>
    </location>
</feature>
<feature type="strand" evidence="52">
    <location>
        <begin position="254"/>
        <end position="257"/>
    </location>
</feature>
<feature type="strand" evidence="52">
    <location>
        <begin position="263"/>
        <end position="266"/>
    </location>
</feature>
<organism>
    <name type="scientific">Homo sapiens</name>
    <name type="common">Human</name>
    <dbReference type="NCBI Taxonomy" id="9606"/>
    <lineage>
        <taxon>Eukaryota</taxon>
        <taxon>Metazoa</taxon>
        <taxon>Chordata</taxon>
        <taxon>Craniata</taxon>
        <taxon>Vertebrata</taxon>
        <taxon>Euteleostomi</taxon>
        <taxon>Mammalia</taxon>
        <taxon>Eutheria</taxon>
        <taxon>Euarchontoglires</taxon>
        <taxon>Primates</taxon>
        <taxon>Haplorrhini</taxon>
        <taxon>Catarrhini</taxon>
        <taxon>Hominidae</taxon>
        <taxon>Homo</taxon>
    </lineage>
</organism>
<proteinExistence type="evidence at protein level"/>
<name>RFA2_HUMAN</name>